<evidence type="ECO:0000255" key="1">
    <source>
        <dbReference type="HAMAP-Rule" id="MF_01315"/>
    </source>
</evidence>
<evidence type="ECO:0000256" key="2">
    <source>
        <dbReference type="SAM" id="MobiDB-lite"/>
    </source>
</evidence>
<evidence type="ECO:0000305" key="3"/>
<gene>
    <name evidence="1" type="primary">rpsM</name>
    <name type="ordered locus">THA_1239</name>
</gene>
<sequence>MARIVGVEIPNDKKVEIALTYIYGIGRTRAKQICEATNIDPDKRVRELNDEEISKIATYIQQNFKVEGELRTEVMQNIKRLIDIGCYRGFRHKLGLPVRGQKTKSNARTRKGPRPSRIKKKK</sequence>
<name>RS13_THEAB</name>
<protein>
    <recommendedName>
        <fullName evidence="1">Small ribosomal subunit protein uS13</fullName>
    </recommendedName>
    <alternativeName>
        <fullName evidence="3">30S ribosomal protein S13</fullName>
    </alternativeName>
</protein>
<dbReference type="EMBL" id="CP001185">
    <property type="protein sequence ID" value="ACJ75684.1"/>
    <property type="molecule type" value="Genomic_DNA"/>
</dbReference>
<dbReference type="RefSeq" id="WP_004101491.1">
    <property type="nucleotide sequence ID" value="NC_011653.1"/>
</dbReference>
<dbReference type="SMR" id="B7IHX0"/>
<dbReference type="STRING" id="484019.THA_1239"/>
<dbReference type="KEGG" id="taf:THA_1239"/>
<dbReference type="eggNOG" id="COG0099">
    <property type="taxonomic scope" value="Bacteria"/>
</dbReference>
<dbReference type="HOGENOM" id="CLU_103849_1_2_0"/>
<dbReference type="OrthoDB" id="9803610at2"/>
<dbReference type="Proteomes" id="UP000002453">
    <property type="component" value="Chromosome"/>
</dbReference>
<dbReference type="GO" id="GO:0005829">
    <property type="term" value="C:cytosol"/>
    <property type="evidence" value="ECO:0007669"/>
    <property type="project" value="TreeGrafter"/>
</dbReference>
<dbReference type="GO" id="GO:0015935">
    <property type="term" value="C:small ribosomal subunit"/>
    <property type="evidence" value="ECO:0007669"/>
    <property type="project" value="TreeGrafter"/>
</dbReference>
<dbReference type="GO" id="GO:0019843">
    <property type="term" value="F:rRNA binding"/>
    <property type="evidence" value="ECO:0007669"/>
    <property type="project" value="UniProtKB-UniRule"/>
</dbReference>
<dbReference type="GO" id="GO:0003735">
    <property type="term" value="F:structural constituent of ribosome"/>
    <property type="evidence" value="ECO:0007669"/>
    <property type="project" value="InterPro"/>
</dbReference>
<dbReference type="GO" id="GO:0000049">
    <property type="term" value="F:tRNA binding"/>
    <property type="evidence" value="ECO:0007669"/>
    <property type="project" value="UniProtKB-UniRule"/>
</dbReference>
<dbReference type="GO" id="GO:0006412">
    <property type="term" value="P:translation"/>
    <property type="evidence" value="ECO:0007669"/>
    <property type="project" value="UniProtKB-UniRule"/>
</dbReference>
<dbReference type="FunFam" id="1.10.8.50:FF:000001">
    <property type="entry name" value="30S ribosomal protein S13"/>
    <property type="match status" value="1"/>
</dbReference>
<dbReference type="FunFam" id="4.10.910.10:FF:000001">
    <property type="entry name" value="30S ribosomal protein S13"/>
    <property type="match status" value="1"/>
</dbReference>
<dbReference type="Gene3D" id="1.10.8.50">
    <property type="match status" value="1"/>
</dbReference>
<dbReference type="Gene3D" id="4.10.910.10">
    <property type="entry name" value="30s ribosomal protein s13, domain 2"/>
    <property type="match status" value="1"/>
</dbReference>
<dbReference type="HAMAP" id="MF_01315">
    <property type="entry name" value="Ribosomal_uS13"/>
    <property type="match status" value="1"/>
</dbReference>
<dbReference type="InterPro" id="IPR027437">
    <property type="entry name" value="Rbsml_uS13_C"/>
</dbReference>
<dbReference type="InterPro" id="IPR001892">
    <property type="entry name" value="Ribosomal_uS13"/>
</dbReference>
<dbReference type="InterPro" id="IPR010979">
    <property type="entry name" value="Ribosomal_uS13-like_H2TH"/>
</dbReference>
<dbReference type="InterPro" id="IPR019980">
    <property type="entry name" value="Ribosomal_uS13_bac-type"/>
</dbReference>
<dbReference type="InterPro" id="IPR018269">
    <property type="entry name" value="Ribosomal_uS13_CS"/>
</dbReference>
<dbReference type="NCBIfam" id="TIGR03631">
    <property type="entry name" value="uS13_bact"/>
    <property type="match status" value="1"/>
</dbReference>
<dbReference type="PANTHER" id="PTHR10871">
    <property type="entry name" value="30S RIBOSOMAL PROTEIN S13/40S RIBOSOMAL PROTEIN S18"/>
    <property type="match status" value="1"/>
</dbReference>
<dbReference type="PANTHER" id="PTHR10871:SF1">
    <property type="entry name" value="SMALL RIBOSOMAL SUBUNIT PROTEIN US13M"/>
    <property type="match status" value="1"/>
</dbReference>
<dbReference type="Pfam" id="PF00416">
    <property type="entry name" value="Ribosomal_S13"/>
    <property type="match status" value="1"/>
</dbReference>
<dbReference type="PIRSF" id="PIRSF002134">
    <property type="entry name" value="Ribosomal_S13"/>
    <property type="match status" value="1"/>
</dbReference>
<dbReference type="SUPFAM" id="SSF46946">
    <property type="entry name" value="S13-like H2TH domain"/>
    <property type="match status" value="1"/>
</dbReference>
<dbReference type="PROSITE" id="PS00646">
    <property type="entry name" value="RIBOSOMAL_S13_1"/>
    <property type="match status" value="1"/>
</dbReference>
<dbReference type="PROSITE" id="PS50159">
    <property type="entry name" value="RIBOSOMAL_S13_2"/>
    <property type="match status" value="1"/>
</dbReference>
<organism>
    <name type="scientific">Thermosipho africanus (strain TCF52B)</name>
    <dbReference type="NCBI Taxonomy" id="484019"/>
    <lineage>
        <taxon>Bacteria</taxon>
        <taxon>Thermotogati</taxon>
        <taxon>Thermotogota</taxon>
        <taxon>Thermotogae</taxon>
        <taxon>Thermotogales</taxon>
        <taxon>Fervidobacteriaceae</taxon>
        <taxon>Thermosipho</taxon>
    </lineage>
</organism>
<feature type="chain" id="PRO_1000141320" description="Small ribosomal subunit protein uS13">
    <location>
        <begin position="1"/>
        <end position="122"/>
    </location>
</feature>
<feature type="region of interest" description="Disordered" evidence="2">
    <location>
        <begin position="98"/>
        <end position="122"/>
    </location>
</feature>
<feature type="compositionally biased region" description="Basic residues" evidence="2">
    <location>
        <begin position="101"/>
        <end position="122"/>
    </location>
</feature>
<comment type="function">
    <text evidence="1">Located at the top of the head of the 30S subunit, it contacts several helices of the 16S rRNA. In the 70S ribosome it contacts the 23S rRNA (bridge B1a) and protein L5 of the 50S subunit (bridge B1b), connecting the 2 subunits; these bridges are implicated in subunit movement. Contacts the tRNAs in the A and P-sites.</text>
</comment>
<comment type="subunit">
    <text evidence="1">Part of the 30S ribosomal subunit. Forms a loose heterodimer with protein S19. Forms two bridges to the 50S subunit in the 70S ribosome.</text>
</comment>
<comment type="similarity">
    <text evidence="1">Belongs to the universal ribosomal protein uS13 family.</text>
</comment>
<keyword id="KW-1185">Reference proteome</keyword>
<keyword id="KW-0687">Ribonucleoprotein</keyword>
<keyword id="KW-0689">Ribosomal protein</keyword>
<keyword id="KW-0694">RNA-binding</keyword>
<keyword id="KW-0699">rRNA-binding</keyword>
<keyword id="KW-0820">tRNA-binding</keyword>
<proteinExistence type="inferred from homology"/>
<accession>B7IHX0</accession>
<reference key="1">
    <citation type="journal article" date="2009" name="J. Bacteriol.">
        <title>The genome of Thermosipho africanus TCF52B: lateral genetic connections to the Firmicutes and Archaea.</title>
        <authorList>
            <person name="Nesboe C.L."/>
            <person name="Bapteste E."/>
            <person name="Curtis B."/>
            <person name="Dahle H."/>
            <person name="Lopez P."/>
            <person name="Macleod D."/>
            <person name="Dlutek M."/>
            <person name="Bowman S."/>
            <person name="Zhaxybayeva O."/>
            <person name="Birkeland N.-K."/>
            <person name="Doolittle W.F."/>
        </authorList>
    </citation>
    <scope>NUCLEOTIDE SEQUENCE [LARGE SCALE GENOMIC DNA]</scope>
    <source>
        <strain>TCF52B</strain>
    </source>
</reference>